<organism>
    <name type="scientific">Burkholderia pseudomallei (strain 1106a)</name>
    <dbReference type="NCBI Taxonomy" id="357348"/>
    <lineage>
        <taxon>Bacteria</taxon>
        <taxon>Pseudomonadati</taxon>
        <taxon>Pseudomonadota</taxon>
        <taxon>Betaproteobacteria</taxon>
        <taxon>Burkholderiales</taxon>
        <taxon>Burkholderiaceae</taxon>
        <taxon>Burkholderia</taxon>
        <taxon>pseudomallei group</taxon>
    </lineage>
</organism>
<comment type="function">
    <text evidence="1">Cell wall formation. Catalyzes the addition of glutamate to the nucleotide precursor UDP-N-acetylmuramoyl-L-alanine (UMA).</text>
</comment>
<comment type="catalytic activity">
    <reaction evidence="1">
        <text>UDP-N-acetyl-alpha-D-muramoyl-L-alanine + D-glutamate + ATP = UDP-N-acetyl-alpha-D-muramoyl-L-alanyl-D-glutamate + ADP + phosphate + H(+)</text>
        <dbReference type="Rhea" id="RHEA:16429"/>
        <dbReference type="ChEBI" id="CHEBI:15378"/>
        <dbReference type="ChEBI" id="CHEBI:29986"/>
        <dbReference type="ChEBI" id="CHEBI:30616"/>
        <dbReference type="ChEBI" id="CHEBI:43474"/>
        <dbReference type="ChEBI" id="CHEBI:83898"/>
        <dbReference type="ChEBI" id="CHEBI:83900"/>
        <dbReference type="ChEBI" id="CHEBI:456216"/>
        <dbReference type="EC" id="6.3.2.9"/>
    </reaction>
</comment>
<comment type="pathway">
    <text evidence="1">Cell wall biogenesis; peptidoglycan biosynthesis.</text>
</comment>
<comment type="subcellular location">
    <subcellularLocation>
        <location evidence="1">Cytoplasm</location>
    </subcellularLocation>
</comment>
<comment type="similarity">
    <text evidence="1">Belongs to the MurCDEF family.</text>
</comment>
<feature type="chain" id="PRO_0000301419" description="UDP-N-acetylmuramoylalanine--D-glutamate ligase">
    <location>
        <begin position="1"/>
        <end position="504"/>
    </location>
</feature>
<feature type="binding site" evidence="1">
    <location>
        <begin position="129"/>
        <end position="135"/>
    </location>
    <ligand>
        <name>ATP</name>
        <dbReference type="ChEBI" id="CHEBI:30616"/>
    </ligand>
</feature>
<reference key="1">
    <citation type="journal article" date="2010" name="Genome Biol. Evol.">
        <title>Continuing evolution of Burkholderia mallei through genome reduction and large-scale rearrangements.</title>
        <authorList>
            <person name="Losada L."/>
            <person name="Ronning C.M."/>
            <person name="DeShazer D."/>
            <person name="Woods D."/>
            <person name="Fedorova N."/>
            <person name="Kim H.S."/>
            <person name="Shabalina S.A."/>
            <person name="Pearson T.R."/>
            <person name="Brinkac L."/>
            <person name="Tan P."/>
            <person name="Nandi T."/>
            <person name="Crabtree J."/>
            <person name="Badger J."/>
            <person name="Beckstrom-Sternberg S."/>
            <person name="Saqib M."/>
            <person name="Schutzer S.E."/>
            <person name="Keim P."/>
            <person name="Nierman W.C."/>
        </authorList>
    </citation>
    <scope>NUCLEOTIDE SEQUENCE [LARGE SCALE GENOMIC DNA]</scope>
    <source>
        <strain>1106a</strain>
    </source>
</reference>
<name>MURD_BURP0</name>
<gene>
    <name evidence="1" type="primary">murD</name>
    <name type="ordered locus">BURPS1106A_3552</name>
</gene>
<accession>A3NZL7</accession>
<keyword id="KW-0067">ATP-binding</keyword>
<keyword id="KW-0131">Cell cycle</keyword>
<keyword id="KW-0132">Cell division</keyword>
<keyword id="KW-0133">Cell shape</keyword>
<keyword id="KW-0961">Cell wall biogenesis/degradation</keyword>
<keyword id="KW-0963">Cytoplasm</keyword>
<keyword id="KW-0436">Ligase</keyword>
<keyword id="KW-0547">Nucleotide-binding</keyword>
<keyword id="KW-0573">Peptidoglycan synthesis</keyword>
<proteinExistence type="inferred from homology"/>
<sequence>MFGDRQRPMVLVLGLGESGLAIARWCARHGCRLRVADTRETPPNLAALTAAGVDFEFVGGAFSPALVDGGIELVALSPGLSPLAEDLAPLVAAARERGIPVWGELEFFAQALAALGANGYAPKVIAITGTNGKTTTTSLAGLLCERAGKKVAVAGNISPAMLDKLTEAIDAAALPDVWVLELSSFQLDTAHTFAPDAATILNITQDHLDWHGGFAAYAAAKGRVFGPRTVRVLNRDDAEVMRFAPPAAAADAPRAVTFGLNEPAADGDYGLLRENGIAWLVEAIDRDGADAPAAPSRRRKQEAANPPDIALKRLMPADALRIRGLHNAANALAAYALARAIGLPAAPLLHGLREYRGEPHRVEVIATLDGVDYVDDSKGTNVGATVAALDGLAQRAVLIAGGDGKGQDFEPLAAPVARWCRAVMLIGRDAPALREALADTGVPLADHATLEAAVRAASALAQPGDAVLLSPACASLDMFRNYAHRADVFRSAVEDIALEKGTTL</sequence>
<dbReference type="EC" id="6.3.2.9" evidence="1"/>
<dbReference type="EMBL" id="CP000572">
    <property type="protein sequence ID" value="ABN90880.1"/>
    <property type="molecule type" value="Genomic_DNA"/>
</dbReference>
<dbReference type="RefSeq" id="WP_004203798.1">
    <property type="nucleotide sequence ID" value="NC_009076.1"/>
</dbReference>
<dbReference type="SMR" id="A3NZL7"/>
<dbReference type="GeneID" id="93061629"/>
<dbReference type="KEGG" id="bpl:BURPS1106A_3552"/>
<dbReference type="HOGENOM" id="CLU_032540_1_1_4"/>
<dbReference type="UniPathway" id="UPA00219"/>
<dbReference type="Proteomes" id="UP000006738">
    <property type="component" value="Chromosome I"/>
</dbReference>
<dbReference type="GO" id="GO:0005737">
    <property type="term" value="C:cytoplasm"/>
    <property type="evidence" value="ECO:0007669"/>
    <property type="project" value="UniProtKB-SubCell"/>
</dbReference>
<dbReference type="GO" id="GO:0005524">
    <property type="term" value="F:ATP binding"/>
    <property type="evidence" value="ECO:0007669"/>
    <property type="project" value="UniProtKB-UniRule"/>
</dbReference>
<dbReference type="GO" id="GO:0008764">
    <property type="term" value="F:UDP-N-acetylmuramoylalanine-D-glutamate ligase activity"/>
    <property type="evidence" value="ECO:0007669"/>
    <property type="project" value="UniProtKB-UniRule"/>
</dbReference>
<dbReference type="GO" id="GO:0051301">
    <property type="term" value="P:cell division"/>
    <property type="evidence" value="ECO:0007669"/>
    <property type="project" value="UniProtKB-KW"/>
</dbReference>
<dbReference type="GO" id="GO:0071555">
    <property type="term" value="P:cell wall organization"/>
    <property type="evidence" value="ECO:0007669"/>
    <property type="project" value="UniProtKB-KW"/>
</dbReference>
<dbReference type="GO" id="GO:0009252">
    <property type="term" value="P:peptidoglycan biosynthetic process"/>
    <property type="evidence" value="ECO:0007669"/>
    <property type="project" value="UniProtKB-UniRule"/>
</dbReference>
<dbReference type="GO" id="GO:0008360">
    <property type="term" value="P:regulation of cell shape"/>
    <property type="evidence" value="ECO:0007669"/>
    <property type="project" value="UniProtKB-KW"/>
</dbReference>
<dbReference type="Gene3D" id="3.90.190.20">
    <property type="entry name" value="Mur ligase, C-terminal domain"/>
    <property type="match status" value="1"/>
</dbReference>
<dbReference type="Gene3D" id="3.40.1190.10">
    <property type="entry name" value="Mur-like, catalytic domain"/>
    <property type="match status" value="1"/>
</dbReference>
<dbReference type="Gene3D" id="3.40.50.720">
    <property type="entry name" value="NAD(P)-binding Rossmann-like Domain"/>
    <property type="match status" value="1"/>
</dbReference>
<dbReference type="HAMAP" id="MF_00639">
    <property type="entry name" value="MurD"/>
    <property type="match status" value="1"/>
</dbReference>
<dbReference type="InterPro" id="IPR036565">
    <property type="entry name" value="Mur-like_cat_sf"/>
</dbReference>
<dbReference type="InterPro" id="IPR004101">
    <property type="entry name" value="Mur_ligase_C"/>
</dbReference>
<dbReference type="InterPro" id="IPR036615">
    <property type="entry name" value="Mur_ligase_C_dom_sf"/>
</dbReference>
<dbReference type="InterPro" id="IPR013221">
    <property type="entry name" value="Mur_ligase_cen"/>
</dbReference>
<dbReference type="InterPro" id="IPR005762">
    <property type="entry name" value="MurD"/>
</dbReference>
<dbReference type="NCBIfam" id="TIGR01087">
    <property type="entry name" value="murD"/>
    <property type="match status" value="1"/>
</dbReference>
<dbReference type="PANTHER" id="PTHR43692">
    <property type="entry name" value="UDP-N-ACETYLMURAMOYLALANINE--D-GLUTAMATE LIGASE"/>
    <property type="match status" value="1"/>
</dbReference>
<dbReference type="PANTHER" id="PTHR43692:SF1">
    <property type="entry name" value="UDP-N-ACETYLMURAMOYLALANINE--D-GLUTAMATE LIGASE"/>
    <property type="match status" value="1"/>
</dbReference>
<dbReference type="Pfam" id="PF02875">
    <property type="entry name" value="Mur_ligase_C"/>
    <property type="match status" value="1"/>
</dbReference>
<dbReference type="Pfam" id="PF08245">
    <property type="entry name" value="Mur_ligase_M"/>
    <property type="match status" value="1"/>
</dbReference>
<dbReference type="Pfam" id="PF21799">
    <property type="entry name" value="MurD-like_N"/>
    <property type="match status" value="1"/>
</dbReference>
<dbReference type="SUPFAM" id="SSF51984">
    <property type="entry name" value="MurCD N-terminal domain"/>
    <property type="match status" value="1"/>
</dbReference>
<dbReference type="SUPFAM" id="SSF53623">
    <property type="entry name" value="MurD-like peptide ligases, catalytic domain"/>
    <property type="match status" value="1"/>
</dbReference>
<dbReference type="SUPFAM" id="SSF53244">
    <property type="entry name" value="MurD-like peptide ligases, peptide-binding domain"/>
    <property type="match status" value="1"/>
</dbReference>
<protein>
    <recommendedName>
        <fullName evidence="1">UDP-N-acetylmuramoylalanine--D-glutamate ligase</fullName>
        <ecNumber evidence="1">6.3.2.9</ecNumber>
    </recommendedName>
    <alternativeName>
        <fullName evidence="1">D-glutamic acid-adding enzyme</fullName>
    </alternativeName>
    <alternativeName>
        <fullName evidence="1">UDP-N-acetylmuramoyl-L-alanyl-D-glutamate synthetase</fullName>
    </alternativeName>
</protein>
<evidence type="ECO:0000255" key="1">
    <source>
        <dbReference type="HAMAP-Rule" id="MF_00639"/>
    </source>
</evidence>